<organism>
    <name type="scientific">Crotalus durissus cumanensis</name>
    <name type="common">South American rattlesnake</name>
    <dbReference type="NCBI Taxonomy" id="184542"/>
    <lineage>
        <taxon>Eukaryota</taxon>
        <taxon>Metazoa</taxon>
        <taxon>Chordata</taxon>
        <taxon>Craniata</taxon>
        <taxon>Vertebrata</taxon>
        <taxon>Euteleostomi</taxon>
        <taxon>Lepidosauria</taxon>
        <taxon>Squamata</taxon>
        <taxon>Bifurcata</taxon>
        <taxon>Unidentata</taxon>
        <taxon>Episquamata</taxon>
        <taxon>Toxicofera</taxon>
        <taxon>Serpentes</taxon>
        <taxon>Colubroidea</taxon>
        <taxon>Viperidae</taxon>
        <taxon>Crotalinae</taxon>
        <taxon>Crotalus</taxon>
    </lineage>
</organism>
<dbReference type="EC" id="3.4.21.-"/>
<dbReference type="SABIO-RK" id="P0DKX3"/>
<dbReference type="GO" id="GO:0005576">
    <property type="term" value="C:extracellular region"/>
    <property type="evidence" value="ECO:0007669"/>
    <property type="project" value="UniProtKB-SubCell"/>
</dbReference>
<dbReference type="GO" id="GO:0008236">
    <property type="term" value="F:serine-type peptidase activity"/>
    <property type="evidence" value="ECO:0007669"/>
    <property type="project" value="UniProtKB-KW"/>
</dbReference>
<dbReference type="GO" id="GO:0090729">
    <property type="term" value="F:toxin activity"/>
    <property type="evidence" value="ECO:0007669"/>
    <property type="project" value="UniProtKB-KW"/>
</dbReference>
<dbReference type="GO" id="GO:0006508">
    <property type="term" value="P:proteolysis"/>
    <property type="evidence" value="ECO:0007669"/>
    <property type="project" value="UniProtKB-KW"/>
</dbReference>
<sequence length="20" mass="2234">VIGGDICNINEHNFLVALYE</sequence>
<comment type="function">
    <text evidence="3">Thrombin-like snake venom serine protease that coagulates human plasma and bovine fibrinogen by hydrolysis of the alpha chains (FGA) (minimum coagulation dose is 60 ug on fibrinogen). Has fibrinogenolytic activities, and degrades preferentially the Aalpha chain (FGA). Shows amidolytic activity toward N-benzoyl-L-Arg-p-nitroanilide, has a higher activity than Cdc SI. In vivo, intravenous injection induces defibrin(ogen)ation and a loss of the righting reflex and opisthotoxins, together with a typical gyroxin-like effect (18-20 minutes). Subcutaneous injection into the footpads induces moderate edema. Potentiates local hemorrhagic activity induced by metalloproteinases (BaP1).</text>
</comment>
<comment type="activity regulation">
    <text evidence="3">Strongly inhibited by PMSF and moderately inhibited by leupeptin. Not inhibited by EDTA, aprotinin, pepstatin, and bestatin.</text>
</comment>
<comment type="biophysicochemical properties">
    <kinetics>
        <KM evidence="3">0.145 mM for N-benzoyl-L-Arg-p-nitroanilide</KM>
        <Vmax evidence="3">0.267 nmol/min/mg enzyme</Vmax>
    </kinetics>
</comment>
<comment type="subunit">
    <text evidence="1">Monomer.</text>
</comment>
<comment type="subcellular location">
    <subcellularLocation>
        <location>Secreted</location>
    </subcellularLocation>
</comment>
<comment type="tissue specificity">
    <text>Expressed by the venom gland.</text>
</comment>
<comment type="mass spectrometry" mass="28799.2" method="MALDI" evidence="3"/>
<comment type="miscellaneous">
    <text evidence="4">Negative results: does not induce myotoxicity or hemorrhage, when injected intramuscularly. Is not lethal when administered either intravenously or intraperitoneally into mice (maximum dose tested is 50 ug) (PubMed:23178323).</text>
</comment>
<comment type="similarity">
    <text evidence="2">Belongs to the peptidase S1 family. Snake venom subfamily.</text>
</comment>
<proteinExistence type="evidence at protein level"/>
<reference key="1">
    <citation type="journal article" date="2013" name="Toxicon">
        <title>Biochemical and biological characterization of a two serine proteinases from Colombian Crotalus durissus cumanensis snake venom.</title>
        <authorList>
            <person name="Patino A.C."/>
            <person name="Pereanez J.A."/>
            <person name="Gutierrez J.M."/>
            <person name="Rucavado A."/>
        </authorList>
    </citation>
    <scope>PROTEIN SEQUENCE</scope>
    <scope>FUNCTION</scope>
    <scope>ACTIVITY REGULATION</scope>
    <scope>BIOPHYSICOCHEMICAL PROPERTIES</scope>
    <scope>MASS SPECTROMETRY</scope>
    <scope>IDENTIFICATION BY MASS SPECTROMETRY</scope>
    <source>
        <tissue>Venom</tissue>
    </source>
</reference>
<protein>
    <recommendedName>
        <fullName>Thrombin-like enzyme Cdc SII</fullName>
        <shortName>SVTLE</shortName>
        <ecNumber>3.4.21.-</ecNumber>
    </recommendedName>
    <alternativeName>
        <fullName>Fibrinogen-clotting enzyme</fullName>
    </alternativeName>
    <alternativeName>
        <fullName>Snake venom serine protease</fullName>
        <shortName>SVSP</shortName>
    </alternativeName>
</protein>
<keyword id="KW-1204">Blood coagulation cascade activating toxin</keyword>
<keyword id="KW-0903">Direct protein sequencing</keyword>
<keyword id="KW-1015">Disulfide bond</keyword>
<keyword id="KW-1206">Fibrinogenolytic toxin</keyword>
<keyword id="KW-1199">Hemostasis impairing toxin</keyword>
<keyword id="KW-0378">Hydrolase</keyword>
<keyword id="KW-0645">Protease</keyword>
<keyword id="KW-0964">Secreted</keyword>
<keyword id="KW-0720">Serine protease</keyword>
<keyword id="KW-0800">Toxin</keyword>
<feature type="chain" id="PRO_0000421250" description="Thrombin-like enzyme Cdc SII">
    <location>
        <begin position="1"/>
        <end position="20" status="greater than"/>
    </location>
</feature>
<feature type="domain" description="Peptidase S1" evidence="2">
    <location>
        <begin position="1"/>
        <end status="unknown"/>
    </location>
</feature>
<feature type="disulfide bond" evidence="2">
    <location>
        <begin position="7"/>
        <end status="unknown"/>
    </location>
</feature>
<feature type="non-terminal residue">
    <location>
        <position position="20"/>
    </location>
</feature>
<accession>P0DKX3</accession>
<evidence type="ECO:0000250" key="1"/>
<evidence type="ECO:0000255" key="2">
    <source>
        <dbReference type="PROSITE-ProRule" id="PRU00274"/>
    </source>
</evidence>
<evidence type="ECO:0000269" key="3">
    <source>
    </source>
</evidence>
<evidence type="ECO:0000305" key="4">
    <source>
    </source>
</evidence>
<name>VSP2_CRODM</name>